<sequence>MRVKHKPWAKDRLEEFPAIYIKNPEDFKGRWQEVFGNNNPIHIEIGSGKGQFISGMAKANPEINYIGIEMIESVLVSALDKAIEADVPNLRLVARDAKLLEECFEKGEIAQIYLNFSDPWPKKRHTKRRLTNPTFLTIYERLLPKAGEIHFKTDNRSLFEYSLVAFSEYNMLLTFVSLDLHNSDYEGNIKTEYEEKFSAKGFPIYRLEAKFDRN</sequence>
<keyword id="KW-0489">Methyltransferase</keyword>
<keyword id="KW-0949">S-adenosyl-L-methionine</keyword>
<keyword id="KW-0808">Transferase</keyword>
<keyword id="KW-0819">tRNA processing</keyword>
<protein>
    <recommendedName>
        <fullName evidence="2">tRNA (guanine-N(7)-)-methyltransferase</fullName>
        <ecNumber evidence="2">2.1.1.33</ecNumber>
    </recommendedName>
    <alternativeName>
        <fullName evidence="2">tRNA (guanine(46)-N(7))-methyltransferase</fullName>
    </alternativeName>
    <alternativeName>
        <fullName evidence="2">tRNA(m7G46)-methyltransferase</fullName>
    </alternativeName>
</protein>
<accession>A0AJ67</accession>
<proteinExistence type="inferred from homology"/>
<organism>
    <name type="scientific">Listeria welshimeri serovar 6b (strain ATCC 35897 / DSM 20650 / CCUG 15529 / CIP 8149 / NCTC 11857 / SLCC 5334 / V8)</name>
    <dbReference type="NCBI Taxonomy" id="386043"/>
    <lineage>
        <taxon>Bacteria</taxon>
        <taxon>Bacillati</taxon>
        <taxon>Bacillota</taxon>
        <taxon>Bacilli</taxon>
        <taxon>Bacillales</taxon>
        <taxon>Listeriaceae</taxon>
        <taxon>Listeria</taxon>
    </lineage>
</organism>
<dbReference type="EC" id="2.1.1.33" evidence="2"/>
<dbReference type="EMBL" id="AM263198">
    <property type="protein sequence ID" value="CAK21049.1"/>
    <property type="molecule type" value="Genomic_DNA"/>
</dbReference>
<dbReference type="RefSeq" id="WP_011702415.1">
    <property type="nucleotide sequence ID" value="NC_008555.1"/>
</dbReference>
<dbReference type="SMR" id="A0AJ67"/>
<dbReference type="STRING" id="386043.lwe1631"/>
<dbReference type="GeneID" id="86846267"/>
<dbReference type="KEGG" id="lwe:lwe1631"/>
<dbReference type="eggNOG" id="COG0220">
    <property type="taxonomic scope" value="Bacteria"/>
</dbReference>
<dbReference type="HOGENOM" id="CLU_050910_2_1_9"/>
<dbReference type="OrthoDB" id="9802090at2"/>
<dbReference type="UniPathway" id="UPA00989"/>
<dbReference type="Proteomes" id="UP000000779">
    <property type="component" value="Chromosome"/>
</dbReference>
<dbReference type="GO" id="GO:0043527">
    <property type="term" value="C:tRNA methyltransferase complex"/>
    <property type="evidence" value="ECO:0007669"/>
    <property type="project" value="TreeGrafter"/>
</dbReference>
<dbReference type="GO" id="GO:0008176">
    <property type="term" value="F:tRNA (guanine(46)-N7)-methyltransferase activity"/>
    <property type="evidence" value="ECO:0007669"/>
    <property type="project" value="UniProtKB-UniRule"/>
</dbReference>
<dbReference type="CDD" id="cd02440">
    <property type="entry name" value="AdoMet_MTases"/>
    <property type="match status" value="1"/>
</dbReference>
<dbReference type="FunFam" id="3.40.50.150:FF:000035">
    <property type="entry name" value="tRNA (guanine-N(7)-)-methyltransferase"/>
    <property type="match status" value="1"/>
</dbReference>
<dbReference type="Gene3D" id="3.40.50.150">
    <property type="entry name" value="Vaccinia Virus protein VP39"/>
    <property type="match status" value="1"/>
</dbReference>
<dbReference type="HAMAP" id="MF_01057">
    <property type="entry name" value="tRNA_methyltr_TrmB"/>
    <property type="match status" value="1"/>
</dbReference>
<dbReference type="InterPro" id="IPR029063">
    <property type="entry name" value="SAM-dependent_MTases_sf"/>
</dbReference>
<dbReference type="InterPro" id="IPR003358">
    <property type="entry name" value="tRNA_(Gua-N-7)_MeTrfase_Trmb"/>
</dbReference>
<dbReference type="InterPro" id="IPR055361">
    <property type="entry name" value="tRNA_methyltr_TrmB_bact"/>
</dbReference>
<dbReference type="NCBIfam" id="NF001080">
    <property type="entry name" value="PRK00121.2-2"/>
    <property type="match status" value="1"/>
</dbReference>
<dbReference type="NCBIfam" id="TIGR00091">
    <property type="entry name" value="tRNA (guanosine(46)-N7)-methyltransferase TrmB"/>
    <property type="match status" value="1"/>
</dbReference>
<dbReference type="PANTHER" id="PTHR23417">
    <property type="entry name" value="3-DEOXY-D-MANNO-OCTULOSONIC-ACID TRANSFERASE/TRNA GUANINE-N 7 - -METHYLTRANSFERASE"/>
    <property type="match status" value="1"/>
</dbReference>
<dbReference type="PANTHER" id="PTHR23417:SF14">
    <property type="entry name" value="PENTACOTRIPEPTIDE-REPEAT REGION OF PRORP DOMAIN-CONTAINING PROTEIN"/>
    <property type="match status" value="1"/>
</dbReference>
<dbReference type="Pfam" id="PF02390">
    <property type="entry name" value="Methyltransf_4"/>
    <property type="match status" value="1"/>
</dbReference>
<dbReference type="SUPFAM" id="SSF53335">
    <property type="entry name" value="S-adenosyl-L-methionine-dependent methyltransferases"/>
    <property type="match status" value="1"/>
</dbReference>
<dbReference type="PROSITE" id="PS51625">
    <property type="entry name" value="SAM_MT_TRMB"/>
    <property type="match status" value="1"/>
</dbReference>
<name>TRMB_LISW6</name>
<feature type="chain" id="PRO_0000288172" description="tRNA (guanine-N(7)-)-methyltransferase">
    <location>
        <begin position="1"/>
        <end position="214"/>
    </location>
</feature>
<feature type="active site" evidence="1">
    <location>
        <position position="118"/>
    </location>
</feature>
<feature type="binding site" evidence="2">
    <location>
        <position position="44"/>
    </location>
    <ligand>
        <name>S-adenosyl-L-methionine</name>
        <dbReference type="ChEBI" id="CHEBI:59789"/>
    </ligand>
</feature>
<feature type="binding site" evidence="2">
    <location>
        <position position="69"/>
    </location>
    <ligand>
        <name>S-adenosyl-L-methionine</name>
        <dbReference type="ChEBI" id="CHEBI:59789"/>
    </ligand>
</feature>
<feature type="binding site" evidence="2">
    <location>
        <position position="96"/>
    </location>
    <ligand>
        <name>S-adenosyl-L-methionine</name>
        <dbReference type="ChEBI" id="CHEBI:59789"/>
    </ligand>
</feature>
<feature type="binding site" evidence="2">
    <location>
        <position position="118"/>
    </location>
    <ligand>
        <name>S-adenosyl-L-methionine</name>
        <dbReference type="ChEBI" id="CHEBI:59789"/>
    </ligand>
</feature>
<feature type="binding site" evidence="2">
    <location>
        <position position="122"/>
    </location>
    <ligand>
        <name>substrate</name>
    </ligand>
</feature>
<feature type="binding site" evidence="2">
    <location>
        <position position="154"/>
    </location>
    <ligand>
        <name>substrate</name>
    </ligand>
</feature>
<feature type="binding site" evidence="2">
    <location>
        <begin position="191"/>
        <end position="194"/>
    </location>
    <ligand>
        <name>substrate</name>
    </ligand>
</feature>
<reference key="1">
    <citation type="journal article" date="2006" name="J. Bacteriol.">
        <title>Whole-genome sequence of Listeria welshimeri reveals common steps in genome reduction with Listeria innocua as compared to Listeria monocytogenes.</title>
        <authorList>
            <person name="Hain T."/>
            <person name="Steinweg C."/>
            <person name="Kuenne C.T."/>
            <person name="Billion A."/>
            <person name="Ghai R."/>
            <person name="Chatterjee S.S."/>
            <person name="Domann E."/>
            <person name="Kaerst U."/>
            <person name="Goesmann A."/>
            <person name="Bekel T."/>
            <person name="Bartels D."/>
            <person name="Kaiser O."/>
            <person name="Meyer F."/>
            <person name="Puehler A."/>
            <person name="Weisshaar B."/>
            <person name="Wehland J."/>
            <person name="Liang C."/>
            <person name="Dandekar T."/>
            <person name="Lampidis R."/>
            <person name="Kreft J."/>
            <person name="Goebel W."/>
            <person name="Chakraborty T."/>
        </authorList>
    </citation>
    <scope>NUCLEOTIDE SEQUENCE [LARGE SCALE GENOMIC DNA]</scope>
    <source>
        <strain>ATCC 35897 / DSM 20650 / CCUG 15529 / CIP 8149 / NCTC 11857 / SLCC 5334 / V8</strain>
    </source>
</reference>
<gene>
    <name evidence="2" type="primary">trmB</name>
    <name type="ordered locus">lwe1631</name>
</gene>
<comment type="function">
    <text evidence="2">Catalyzes the formation of N(7)-methylguanine at position 46 (m7G46) in tRNA.</text>
</comment>
<comment type="catalytic activity">
    <reaction evidence="2">
        <text>guanosine(46) in tRNA + S-adenosyl-L-methionine = N(7)-methylguanosine(46) in tRNA + S-adenosyl-L-homocysteine</text>
        <dbReference type="Rhea" id="RHEA:42708"/>
        <dbReference type="Rhea" id="RHEA-COMP:10188"/>
        <dbReference type="Rhea" id="RHEA-COMP:10189"/>
        <dbReference type="ChEBI" id="CHEBI:57856"/>
        <dbReference type="ChEBI" id="CHEBI:59789"/>
        <dbReference type="ChEBI" id="CHEBI:74269"/>
        <dbReference type="ChEBI" id="CHEBI:74480"/>
        <dbReference type="EC" id="2.1.1.33"/>
    </reaction>
</comment>
<comment type="pathway">
    <text evidence="2">tRNA modification; N(7)-methylguanine-tRNA biosynthesis.</text>
</comment>
<comment type="similarity">
    <text evidence="2">Belongs to the class I-like SAM-binding methyltransferase superfamily. TrmB family.</text>
</comment>
<evidence type="ECO:0000250" key="1"/>
<evidence type="ECO:0000255" key="2">
    <source>
        <dbReference type="HAMAP-Rule" id="MF_01057"/>
    </source>
</evidence>